<keyword id="KW-0903">Direct protein sequencing</keyword>
<keyword id="KW-0964">Secreted</keyword>
<keyword id="KW-0800">Toxin</keyword>
<sequence length="196" mass="21278">GKGLDWFKKQWGKLKNSFKKVGAKVKAAFNKGRDFLKKKGIKVDPLNCQGSKCRSCLIFTLKPKKFCVEYAFSASAITISLTKEKDDEAKVLLGPFTIKTGNIPQCSKLGSFIGELCLQGVEGRLKSSNGKPHVNLCVGLLLKKFGCGAKICVSYVDGKFSGSFKPKLFAGDEENGTIMEAGDKEDEGKVIDAVPE</sequence>
<protein>
    <recommendedName>
        <fullName evidence="2 3">Venom platylysin</fullName>
    </recommendedName>
</protein>
<evidence type="ECO:0000269" key="1">
    <source ref="1"/>
</evidence>
<evidence type="ECO:0000303" key="2">
    <source>
    </source>
</evidence>
<evidence type="ECO:0000303" key="3">
    <source ref="1"/>
</evidence>
<evidence type="ECO:0000305" key="4"/>
<evidence type="ECO:0000305" key="5">
    <source ref="1"/>
</evidence>
<proteinExistence type="evidence at protein level"/>
<dbReference type="GO" id="GO:0005576">
    <property type="term" value="C:extracellular region"/>
    <property type="evidence" value="ECO:0007669"/>
    <property type="project" value="UniProtKB-SubCell"/>
</dbReference>
<dbReference type="GO" id="GO:0090729">
    <property type="term" value="F:toxin activity"/>
    <property type="evidence" value="ECO:0007669"/>
    <property type="project" value="UniProtKB-KW"/>
</dbReference>
<comment type="function">
    <text evidence="5">Probable insecticidal toxin that has been detected in a semi-pure insecticidal fraction.</text>
</comment>
<comment type="subcellular location">
    <subcellularLocation>
        <location evidence="1">Secreted</location>
    </subcellularLocation>
</comment>
<comment type="tissue specificity">
    <text evidence="5">Expressed by the venom gland.</text>
</comment>
<comment type="similarity">
    <text evidence="4">Belongs to the redulysin-like family.</text>
</comment>
<feature type="chain" id="PRO_0000454326" description="Venom platylysin" evidence="1">
    <location>
        <begin position="1"/>
        <end position="196"/>
    </location>
</feature>
<organism>
    <name type="scientific">Platymeris biguttatus</name>
    <name type="common">Two-spotted assassin bug</name>
    <dbReference type="NCBI Taxonomy" id="2588089"/>
    <lineage>
        <taxon>Eukaryota</taxon>
        <taxon>Metazoa</taxon>
        <taxon>Ecdysozoa</taxon>
        <taxon>Arthropoda</taxon>
        <taxon>Hexapoda</taxon>
        <taxon>Insecta</taxon>
        <taxon>Pterygota</taxon>
        <taxon>Neoptera</taxon>
        <taxon>Paraneoptera</taxon>
        <taxon>Hemiptera</taxon>
        <taxon>Heteroptera</taxon>
        <taxon>Panheteroptera</taxon>
        <taxon>Cimicomorpha</taxon>
        <taxon>Reduviidae</taxon>
        <taxon>Platymeris</taxon>
    </lineage>
</organism>
<accession>P0DQR9</accession>
<reference key="1">
    <citation type="thesis" date="2003" institute="University of California" country="United States">
        <title>A biochemical and molecular analysis of venom with distinct physiological actions from two arthropod sources: the parasitoid jewel wasp, Ampulex compressa, of the insect order hymenoptera and the obligate entomophagous assassin bug, Platymeris biguttata, of the insect order hemiptera.</title>
        <authorList>
            <person name="Moore E.L."/>
        </authorList>
    </citation>
    <scope>PROTEIN SEQUENCE</scope>
    <scope>FUNCTION</scope>
    <scope>SUBCELLULAR LOCATION</scope>
    <source>
        <tissue>Venom</tissue>
    </source>
</reference>
<reference key="2">
    <citation type="journal article" date="2019" name="Toxins">
        <title>Missiles of mass disruption: composition and glandular origin of venom used as a projectile defensive weapon by the assassin bug Platymeris rhadamanthus.</title>
        <authorList>
            <person name="Walker A.A."/>
            <person name="Robinson S.D."/>
            <person name="Undheim E.A.B."/>
            <person name="Jin J."/>
            <person name="Han X."/>
            <person name="Fry B.G."/>
            <person name="Vetter I."/>
            <person name="King G.F."/>
        </authorList>
    </citation>
    <scope>REVIEW</scope>
</reference>
<name>REDPL_PLABI</name>